<name>ACPS_ECO27</name>
<proteinExistence type="inferred from homology"/>
<evidence type="ECO:0000255" key="1">
    <source>
        <dbReference type="HAMAP-Rule" id="MF_00101"/>
    </source>
</evidence>
<feature type="chain" id="PRO_1000118807" description="Holo-[acyl-carrier-protein] synthase">
    <location>
        <begin position="1"/>
        <end position="126"/>
    </location>
</feature>
<feature type="binding site" evidence="1">
    <location>
        <position position="9"/>
    </location>
    <ligand>
        <name>Mg(2+)</name>
        <dbReference type="ChEBI" id="CHEBI:18420"/>
    </ligand>
</feature>
<feature type="binding site" evidence="1">
    <location>
        <position position="58"/>
    </location>
    <ligand>
        <name>Mg(2+)</name>
        <dbReference type="ChEBI" id="CHEBI:18420"/>
    </ligand>
</feature>
<dbReference type="EC" id="2.7.8.7" evidence="1"/>
<dbReference type="EMBL" id="FM180568">
    <property type="protein sequence ID" value="CAS10388.1"/>
    <property type="molecule type" value="Genomic_DNA"/>
</dbReference>
<dbReference type="RefSeq" id="WP_000986038.1">
    <property type="nucleotide sequence ID" value="NC_011601.1"/>
</dbReference>
<dbReference type="SMR" id="B7UH03"/>
<dbReference type="KEGG" id="ecg:E2348C_2840"/>
<dbReference type="HOGENOM" id="CLU_089696_3_1_6"/>
<dbReference type="Proteomes" id="UP000008205">
    <property type="component" value="Chromosome"/>
</dbReference>
<dbReference type="GO" id="GO:0005737">
    <property type="term" value="C:cytoplasm"/>
    <property type="evidence" value="ECO:0007669"/>
    <property type="project" value="UniProtKB-SubCell"/>
</dbReference>
<dbReference type="GO" id="GO:0008897">
    <property type="term" value="F:holo-[acyl-carrier-protein] synthase activity"/>
    <property type="evidence" value="ECO:0007669"/>
    <property type="project" value="UniProtKB-UniRule"/>
</dbReference>
<dbReference type="GO" id="GO:0000287">
    <property type="term" value="F:magnesium ion binding"/>
    <property type="evidence" value="ECO:0007669"/>
    <property type="project" value="UniProtKB-UniRule"/>
</dbReference>
<dbReference type="GO" id="GO:0006633">
    <property type="term" value="P:fatty acid biosynthetic process"/>
    <property type="evidence" value="ECO:0007669"/>
    <property type="project" value="UniProtKB-UniRule"/>
</dbReference>
<dbReference type="FunFam" id="3.90.470.20:FF:000001">
    <property type="entry name" value="Holo-[acyl-carrier-protein] synthase"/>
    <property type="match status" value="1"/>
</dbReference>
<dbReference type="Gene3D" id="3.90.470.20">
    <property type="entry name" value="4'-phosphopantetheinyl transferase domain"/>
    <property type="match status" value="1"/>
</dbReference>
<dbReference type="HAMAP" id="MF_00101">
    <property type="entry name" value="AcpS"/>
    <property type="match status" value="1"/>
</dbReference>
<dbReference type="InterPro" id="IPR008278">
    <property type="entry name" value="4-PPantetheinyl_Trfase_dom"/>
</dbReference>
<dbReference type="InterPro" id="IPR037143">
    <property type="entry name" value="4-PPantetheinyl_Trfase_dom_sf"/>
</dbReference>
<dbReference type="InterPro" id="IPR002582">
    <property type="entry name" value="ACPS"/>
</dbReference>
<dbReference type="InterPro" id="IPR004568">
    <property type="entry name" value="Ppantetheine-prot_Trfase_dom"/>
</dbReference>
<dbReference type="NCBIfam" id="TIGR00516">
    <property type="entry name" value="acpS"/>
    <property type="match status" value="1"/>
</dbReference>
<dbReference type="NCBIfam" id="TIGR00556">
    <property type="entry name" value="pantethn_trn"/>
    <property type="match status" value="1"/>
</dbReference>
<dbReference type="Pfam" id="PF01648">
    <property type="entry name" value="ACPS"/>
    <property type="match status" value="1"/>
</dbReference>
<dbReference type="SUPFAM" id="SSF56214">
    <property type="entry name" value="4'-phosphopantetheinyl transferase"/>
    <property type="match status" value="1"/>
</dbReference>
<organism>
    <name type="scientific">Escherichia coli O127:H6 (strain E2348/69 / EPEC)</name>
    <dbReference type="NCBI Taxonomy" id="574521"/>
    <lineage>
        <taxon>Bacteria</taxon>
        <taxon>Pseudomonadati</taxon>
        <taxon>Pseudomonadota</taxon>
        <taxon>Gammaproteobacteria</taxon>
        <taxon>Enterobacterales</taxon>
        <taxon>Enterobacteriaceae</taxon>
        <taxon>Escherichia</taxon>
    </lineage>
</organism>
<protein>
    <recommendedName>
        <fullName evidence="1">Holo-[acyl-carrier-protein] synthase</fullName>
        <shortName evidence="1">Holo-ACP synthase</shortName>
        <ecNumber evidence="1">2.7.8.7</ecNumber>
    </recommendedName>
    <alternativeName>
        <fullName evidence="1">4'-phosphopantetheinyl transferase AcpS</fullName>
    </alternativeName>
</protein>
<reference key="1">
    <citation type="journal article" date="2009" name="J. Bacteriol.">
        <title>Complete genome sequence and comparative genome analysis of enteropathogenic Escherichia coli O127:H6 strain E2348/69.</title>
        <authorList>
            <person name="Iguchi A."/>
            <person name="Thomson N.R."/>
            <person name="Ogura Y."/>
            <person name="Saunders D."/>
            <person name="Ooka T."/>
            <person name="Henderson I.R."/>
            <person name="Harris D."/>
            <person name="Asadulghani M."/>
            <person name="Kurokawa K."/>
            <person name="Dean P."/>
            <person name="Kenny B."/>
            <person name="Quail M.A."/>
            <person name="Thurston S."/>
            <person name="Dougan G."/>
            <person name="Hayashi T."/>
            <person name="Parkhill J."/>
            <person name="Frankel G."/>
        </authorList>
    </citation>
    <scope>NUCLEOTIDE SEQUENCE [LARGE SCALE GENOMIC DNA]</scope>
    <source>
        <strain>E2348/69 / EPEC</strain>
    </source>
</reference>
<sequence length="126" mass="14152">MAILGLGTDIVEIARIEAVIARSGERLARRVLSDNEWEIWKTHHQPVRFLAKRFAVKEAAAKAFGTGIRNGLAFNQFEVFNDELGKPRLRLWGEALKLAEKLGVVNMHVTLADERHYACATVIIES</sequence>
<keyword id="KW-0963">Cytoplasm</keyword>
<keyword id="KW-0275">Fatty acid biosynthesis</keyword>
<keyword id="KW-0276">Fatty acid metabolism</keyword>
<keyword id="KW-0444">Lipid biosynthesis</keyword>
<keyword id="KW-0443">Lipid metabolism</keyword>
<keyword id="KW-0460">Magnesium</keyword>
<keyword id="KW-0479">Metal-binding</keyword>
<keyword id="KW-1185">Reference proteome</keyword>
<keyword id="KW-0808">Transferase</keyword>
<comment type="function">
    <text evidence="1">Transfers the 4'-phosphopantetheine moiety from coenzyme A to a Ser of acyl-carrier-protein.</text>
</comment>
<comment type="catalytic activity">
    <reaction evidence="1">
        <text>apo-[ACP] + CoA = holo-[ACP] + adenosine 3',5'-bisphosphate + H(+)</text>
        <dbReference type="Rhea" id="RHEA:12068"/>
        <dbReference type="Rhea" id="RHEA-COMP:9685"/>
        <dbReference type="Rhea" id="RHEA-COMP:9690"/>
        <dbReference type="ChEBI" id="CHEBI:15378"/>
        <dbReference type="ChEBI" id="CHEBI:29999"/>
        <dbReference type="ChEBI" id="CHEBI:57287"/>
        <dbReference type="ChEBI" id="CHEBI:58343"/>
        <dbReference type="ChEBI" id="CHEBI:64479"/>
        <dbReference type="EC" id="2.7.8.7"/>
    </reaction>
</comment>
<comment type="cofactor">
    <cofactor evidence="1">
        <name>Mg(2+)</name>
        <dbReference type="ChEBI" id="CHEBI:18420"/>
    </cofactor>
</comment>
<comment type="subcellular location">
    <subcellularLocation>
        <location evidence="1">Cytoplasm</location>
    </subcellularLocation>
</comment>
<comment type="similarity">
    <text evidence="1">Belongs to the P-Pant transferase superfamily. AcpS family.</text>
</comment>
<accession>B7UH03</accession>
<gene>
    <name evidence="1" type="primary">acpS</name>
    <name type="ordered locus">E2348C_2840</name>
</gene>